<name>RL361_AERS4</name>
<keyword id="KW-0687">Ribonucleoprotein</keyword>
<keyword id="KW-0689">Ribosomal protein</keyword>
<sequence length="41" mass="4827">MKVLSSLKSAKSRHPDCQIVRRRGKLFVICKSNPRFKARQR</sequence>
<proteinExistence type="inferred from homology"/>
<accession>A4SNF1</accession>
<feature type="chain" id="PRO_0000344639" description="Large ribosomal subunit protein bL36A">
    <location>
        <begin position="1"/>
        <end position="41"/>
    </location>
</feature>
<protein>
    <recommendedName>
        <fullName evidence="1">Large ribosomal subunit protein bL36A</fullName>
    </recommendedName>
    <alternativeName>
        <fullName evidence="2">50S ribosomal protein L36 1</fullName>
    </alternativeName>
</protein>
<reference key="1">
    <citation type="journal article" date="2008" name="BMC Genomics">
        <title>The genome of Aeromonas salmonicida subsp. salmonicida A449: insights into the evolution of a fish pathogen.</title>
        <authorList>
            <person name="Reith M.E."/>
            <person name="Singh R.K."/>
            <person name="Curtis B."/>
            <person name="Boyd J.M."/>
            <person name="Bouevitch A."/>
            <person name="Kimball J."/>
            <person name="Munholland J."/>
            <person name="Murphy C."/>
            <person name="Sarty D."/>
            <person name="Williams J."/>
            <person name="Nash J.H."/>
            <person name="Johnson S.C."/>
            <person name="Brown L.L."/>
        </authorList>
    </citation>
    <scope>NUCLEOTIDE SEQUENCE [LARGE SCALE GENOMIC DNA]</scope>
    <source>
        <strain>A449</strain>
    </source>
</reference>
<evidence type="ECO:0000255" key="1">
    <source>
        <dbReference type="HAMAP-Rule" id="MF_00251"/>
    </source>
</evidence>
<evidence type="ECO:0000305" key="2"/>
<comment type="similarity">
    <text evidence="1">Belongs to the bacterial ribosomal protein bL36 family.</text>
</comment>
<organism>
    <name type="scientific">Aeromonas salmonicida (strain A449)</name>
    <dbReference type="NCBI Taxonomy" id="382245"/>
    <lineage>
        <taxon>Bacteria</taxon>
        <taxon>Pseudomonadati</taxon>
        <taxon>Pseudomonadota</taxon>
        <taxon>Gammaproteobacteria</taxon>
        <taxon>Aeromonadales</taxon>
        <taxon>Aeromonadaceae</taxon>
        <taxon>Aeromonas</taxon>
    </lineage>
</organism>
<gene>
    <name evidence="1" type="primary">rpmJ1</name>
    <name type="ordered locus">ASA_2375</name>
</gene>
<dbReference type="EMBL" id="CP000644">
    <property type="protein sequence ID" value="ABO90423.1"/>
    <property type="molecule type" value="Genomic_DNA"/>
</dbReference>
<dbReference type="SMR" id="A4SNF1"/>
<dbReference type="STRING" id="29491.GCA_000820065_01554"/>
<dbReference type="KEGG" id="asa:ASA_2375"/>
<dbReference type="eggNOG" id="COG0257">
    <property type="taxonomic scope" value="Bacteria"/>
</dbReference>
<dbReference type="HOGENOM" id="CLU_135723_3_3_6"/>
<dbReference type="Proteomes" id="UP000000225">
    <property type="component" value="Chromosome"/>
</dbReference>
<dbReference type="GO" id="GO:1990904">
    <property type="term" value="C:ribonucleoprotein complex"/>
    <property type="evidence" value="ECO:0007669"/>
    <property type="project" value="UniProtKB-KW"/>
</dbReference>
<dbReference type="GO" id="GO:0005840">
    <property type="term" value="C:ribosome"/>
    <property type="evidence" value="ECO:0007669"/>
    <property type="project" value="UniProtKB-KW"/>
</dbReference>
<dbReference type="GO" id="GO:0003735">
    <property type="term" value="F:structural constituent of ribosome"/>
    <property type="evidence" value="ECO:0007669"/>
    <property type="project" value="InterPro"/>
</dbReference>
<dbReference type="GO" id="GO:0006412">
    <property type="term" value="P:translation"/>
    <property type="evidence" value="ECO:0007669"/>
    <property type="project" value="UniProtKB-UniRule"/>
</dbReference>
<dbReference type="HAMAP" id="MF_00251">
    <property type="entry name" value="Ribosomal_bL36"/>
    <property type="match status" value="1"/>
</dbReference>
<dbReference type="InterPro" id="IPR000473">
    <property type="entry name" value="Ribosomal_bL36"/>
</dbReference>
<dbReference type="InterPro" id="IPR035977">
    <property type="entry name" value="Ribosomal_bL36_sp"/>
</dbReference>
<dbReference type="InterPro" id="IPR047621">
    <property type="entry name" value="Ribosomal_L36_bact"/>
</dbReference>
<dbReference type="NCBIfam" id="NF002021">
    <property type="entry name" value="PRK00831.1"/>
    <property type="match status" value="1"/>
</dbReference>
<dbReference type="NCBIfam" id="TIGR01022">
    <property type="entry name" value="rpmJ_bact"/>
    <property type="match status" value="1"/>
</dbReference>
<dbReference type="PANTHER" id="PTHR47781">
    <property type="entry name" value="50S RIBOSOMAL PROTEIN L36 2"/>
    <property type="match status" value="1"/>
</dbReference>
<dbReference type="PANTHER" id="PTHR47781:SF1">
    <property type="entry name" value="LARGE RIBOSOMAL SUBUNIT PROTEIN BL36B"/>
    <property type="match status" value="1"/>
</dbReference>
<dbReference type="Pfam" id="PF00444">
    <property type="entry name" value="Ribosomal_L36"/>
    <property type="match status" value="1"/>
</dbReference>
<dbReference type="SUPFAM" id="SSF57840">
    <property type="entry name" value="Ribosomal protein L36"/>
    <property type="match status" value="1"/>
</dbReference>
<dbReference type="PROSITE" id="PS00828">
    <property type="entry name" value="RIBOSOMAL_L36"/>
    <property type="match status" value="1"/>
</dbReference>